<comment type="function">
    <text evidence="1">The alpha subunit is responsible for the aldol cleavage of indoleglycerol phosphate to indole and glyceraldehyde 3-phosphate.</text>
</comment>
<comment type="catalytic activity">
    <reaction evidence="1">
        <text>(1S,2R)-1-C-(indol-3-yl)glycerol 3-phosphate + L-serine = D-glyceraldehyde 3-phosphate + L-tryptophan + H2O</text>
        <dbReference type="Rhea" id="RHEA:10532"/>
        <dbReference type="ChEBI" id="CHEBI:15377"/>
        <dbReference type="ChEBI" id="CHEBI:33384"/>
        <dbReference type="ChEBI" id="CHEBI:57912"/>
        <dbReference type="ChEBI" id="CHEBI:58866"/>
        <dbReference type="ChEBI" id="CHEBI:59776"/>
        <dbReference type="EC" id="4.2.1.20"/>
    </reaction>
</comment>
<comment type="pathway">
    <text evidence="1">Amino-acid biosynthesis; L-tryptophan biosynthesis; L-tryptophan from chorismate: step 5/5.</text>
</comment>
<comment type="subunit">
    <text evidence="1">Tetramer of two alpha and two beta chains.</text>
</comment>
<comment type="similarity">
    <text evidence="1">Belongs to the TrpA family.</text>
</comment>
<organism>
    <name type="scientific">Bacillus subtilis subsp. natto</name>
    <dbReference type="NCBI Taxonomy" id="86029"/>
    <lineage>
        <taxon>Bacteria</taxon>
        <taxon>Bacillati</taxon>
        <taxon>Bacillota</taxon>
        <taxon>Bacilli</taxon>
        <taxon>Bacillales</taxon>
        <taxon>Bacillaceae</taxon>
        <taxon>Bacillus</taxon>
    </lineage>
</organism>
<gene>
    <name evidence="1" type="primary">trpA</name>
</gene>
<reference key="1">
    <citation type="submission" date="2002-09" db="EMBL/GenBank/DDBJ databases">
        <title>Genetic analysis of trpA and hisC genes in Bacillus subtilis natto OK2.</title>
        <authorList>
            <person name="Murayama R."/>
            <person name="Nanamiya H."/>
            <person name="Kawamura F."/>
        </authorList>
    </citation>
    <scope>NUCLEOTIDE SEQUENCE [GENOMIC DNA]</scope>
    <source>
        <strain>OK2</strain>
    </source>
</reference>
<accession>Q8KZ93</accession>
<dbReference type="EC" id="4.2.1.20" evidence="1"/>
<dbReference type="EMBL" id="AB091253">
    <property type="protein sequence ID" value="BAC11846.1"/>
    <property type="molecule type" value="Genomic_DNA"/>
</dbReference>
<dbReference type="RefSeq" id="WP_014480120.1">
    <property type="nucleotide sequence ID" value="NZ_SJSU01000007.1"/>
</dbReference>
<dbReference type="SMR" id="Q8KZ93"/>
<dbReference type="UniPathway" id="UPA00035">
    <property type="reaction ID" value="UER00044"/>
</dbReference>
<dbReference type="GO" id="GO:0005829">
    <property type="term" value="C:cytosol"/>
    <property type="evidence" value="ECO:0007669"/>
    <property type="project" value="TreeGrafter"/>
</dbReference>
<dbReference type="GO" id="GO:0004834">
    <property type="term" value="F:tryptophan synthase activity"/>
    <property type="evidence" value="ECO:0007669"/>
    <property type="project" value="UniProtKB-UniRule"/>
</dbReference>
<dbReference type="CDD" id="cd04724">
    <property type="entry name" value="Tryptophan_synthase_alpha"/>
    <property type="match status" value="1"/>
</dbReference>
<dbReference type="FunFam" id="3.20.20.70:FF:000037">
    <property type="entry name" value="Tryptophan synthase alpha chain"/>
    <property type="match status" value="1"/>
</dbReference>
<dbReference type="Gene3D" id="3.20.20.70">
    <property type="entry name" value="Aldolase class I"/>
    <property type="match status" value="1"/>
</dbReference>
<dbReference type="HAMAP" id="MF_00131">
    <property type="entry name" value="Trp_synth_alpha"/>
    <property type="match status" value="1"/>
</dbReference>
<dbReference type="InterPro" id="IPR013785">
    <property type="entry name" value="Aldolase_TIM"/>
</dbReference>
<dbReference type="InterPro" id="IPR011060">
    <property type="entry name" value="RibuloseP-bd_barrel"/>
</dbReference>
<dbReference type="InterPro" id="IPR018204">
    <property type="entry name" value="Trp_synthase_alpha_AS"/>
</dbReference>
<dbReference type="InterPro" id="IPR002028">
    <property type="entry name" value="Trp_synthase_suA"/>
</dbReference>
<dbReference type="NCBIfam" id="TIGR00262">
    <property type="entry name" value="trpA"/>
    <property type="match status" value="1"/>
</dbReference>
<dbReference type="PANTHER" id="PTHR43406:SF1">
    <property type="entry name" value="TRYPTOPHAN SYNTHASE ALPHA CHAIN, CHLOROPLASTIC"/>
    <property type="match status" value="1"/>
</dbReference>
<dbReference type="PANTHER" id="PTHR43406">
    <property type="entry name" value="TRYPTOPHAN SYNTHASE, ALPHA CHAIN"/>
    <property type="match status" value="1"/>
</dbReference>
<dbReference type="Pfam" id="PF00290">
    <property type="entry name" value="Trp_syntA"/>
    <property type="match status" value="1"/>
</dbReference>
<dbReference type="SUPFAM" id="SSF51366">
    <property type="entry name" value="Ribulose-phoshate binding barrel"/>
    <property type="match status" value="1"/>
</dbReference>
<dbReference type="PROSITE" id="PS00167">
    <property type="entry name" value="TRP_SYNTHASE_ALPHA"/>
    <property type="match status" value="1"/>
</dbReference>
<evidence type="ECO:0000255" key="1">
    <source>
        <dbReference type="HAMAP-Rule" id="MF_00131"/>
    </source>
</evidence>
<proteinExistence type="inferred from homology"/>
<keyword id="KW-0028">Amino-acid biosynthesis</keyword>
<keyword id="KW-0057">Aromatic amino acid biosynthesis</keyword>
<keyword id="KW-0456">Lyase</keyword>
<keyword id="KW-0822">Tryptophan biosynthesis</keyword>
<protein>
    <recommendedName>
        <fullName evidence="1">Tryptophan synthase alpha chain</fullName>
        <ecNumber evidence="1">4.2.1.20</ecNumber>
    </recommendedName>
</protein>
<name>TRPA_BACNA</name>
<feature type="chain" id="PRO_0000098741" description="Tryptophan synthase alpha chain">
    <location>
        <begin position="1"/>
        <end position="267"/>
    </location>
</feature>
<feature type="active site" description="Proton acceptor" evidence="1">
    <location>
        <position position="43"/>
    </location>
</feature>
<feature type="active site" description="Proton acceptor" evidence="1">
    <location>
        <position position="54"/>
    </location>
</feature>
<sequence length="267" mass="29436">MFKLDLQPTEKLFIPFITAGDPVPEVSIELAKSLQKAGATALELGVAYSDPLADGPVIQRASKRALDQGMNIVKAIELGGEMKKNGVNIPIILFTYYNPVLQLNKEYFFALLQENHIDGLLVPDLPLEESNSLQEECKSHEVTYISLVAPTSESRLKTIIEQAEGFVYCVSSLGVTGVRNEFNSSVYPFIRTVKNLSTVPVAVGFGISNREQVIKMNEISDGVVVGSALVRKIEELKDRLISAETRNQALQEFEDYAMAFSGLYSLK</sequence>